<organism>
    <name type="scientific">Saccharomyces pastorianus</name>
    <name type="common">Lager yeast</name>
    <name type="synonym">Saccharomyces cerevisiae x Saccharomyces eubayanus</name>
    <dbReference type="NCBI Taxonomy" id="27292"/>
    <lineage>
        <taxon>Eukaryota</taxon>
        <taxon>Fungi</taxon>
        <taxon>Dikarya</taxon>
        <taxon>Ascomycota</taxon>
        <taxon>Saccharomycotina</taxon>
        <taxon>Saccharomycetes</taxon>
        <taxon>Saccharomycetales</taxon>
        <taxon>Saccharomycetaceae</taxon>
        <taxon>Saccharomyces</taxon>
    </lineage>
</organism>
<feature type="chain" id="PRO_0000155757" description="Homoserine O-acetyltransferase">
    <location>
        <begin position="1"/>
        <end position="486"/>
    </location>
</feature>
<feature type="domain" description="AB hydrolase-1" evidence="2">
    <location>
        <begin position="66"/>
        <end position="436"/>
    </location>
</feature>
<feature type="region of interest" description="Disordered" evidence="3">
    <location>
        <begin position="248"/>
        <end position="274"/>
    </location>
</feature>
<feature type="compositionally biased region" description="Polar residues" evidence="3">
    <location>
        <begin position="250"/>
        <end position="262"/>
    </location>
</feature>
<feature type="active site" evidence="2">
    <location>
        <position position="162"/>
    </location>
</feature>
<feature type="active site" description="Nucleophile" evidence="1">
    <location>
        <position position="162"/>
    </location>
</feature>
<feature type="active site" evidence="1">
    <location>
        <position position="401"/>
    </location>
</feature>
<feature type="active site" evidence="1">
    <location>
        <position position="430"/>
    </location>
</feature>
<proteinExistence type="inferred from homology"/>
<evidence type="ECO:0000250" key="1">
    <source>
        <dbReference type="UniProtKB" id="O60062"/>
    </source>
</evidence>
<evidence type="ECO:0000255" key="2"/>
<evidence type="ECO:0000256" key="3">
    <source>
        <dbReference type="SAM" id="MobiDB-lite"/>
    </source>
</evidence>
<evidence type="ECO:0000305" key="4"/>
<comment type="function">
    <text evidence="1">Commits homoserine to the methionine biosynthesis pathway by catalyzing its O-acetylation.</text>
</comment>
<comment type="catalytic activity">
    <reaction evidence="1">
        <text>L-homoserine + acetyl-CoA = O-acetyl-L-homoserine + CoA</text>
        <dbReference type="Rhea" id="RHEA:13701"/>
        <dbReference type="ChEBI" id="CHEBI:57287"/>
        <dbReference type="ChEBI" id="CHEBI:57288"/>
        <dbReference type="ChEBI" id="CHEBI:57476"/>
        <dbReference type="ChEBI" id="CHEBI:57716"/>
        <dbReference type="EC" id="2.3.1.31"/>
    </reaction>
    <physiologicalReaction direction="left-to-right" evidence="1">
        <dbReference type="Rhea" id="RHEA:13702"/>
    </physiologicalReaction>
</comment>
<comment type="pathway">
    <text evidence="1">Amino-acid biosynthesis; L-methionine biosynthesis via de novo pathway; O-acetyl-L-homoserine from L-homoserine: step 1/1.</text>
</comment>
<comment type="similarity">
    <text evidence="4">Belongs to the AB hydrolase superfamily. MetX family.</text>
</comment>
<reference key="1">
    <citation type="journal article" date="1994" name="Gene">
        <title>Saccharomyces carlsbergensis contains two functional MET2 alleles similar to homologues from S. cerevisiae and S. monacensis.</title>
        <authorList>
            <person name="Hansen J."/>
            <person name="Kielland-Brandt M.C."/>
        </authorList>
    </citation>
    <scope>NUCLEOTIDE SEQUENCE [GENOMIC DNA]</scope>
    <source>
        <strain>M204</strain>
    </source>
</reference>
<gene>
    <name type="primary">MET2</name>
</gene>
<protein>
    <recommendedName>
        <fullName>Homoserine O-acetyltransferase</fullName>
        <ecNumber evidence="1">2.3.1.31</ecNumber>
    </recommendedName>
    <alternativeName>
        <fullName>Homoserine O-trans-acetylase</fullName>
    </alternativeName>
</protein>
<dbReference type="EC" id="2.3.1.31" evidence="1"/>
<dbReference type="EMBL" id="L16688">
    <property type="protein sequence ID" value="AAB04108.1"/>
    <property type="molecule type" value="Unassigned_DNA"/>
</dbReference>
<dbReference type="SMR" id="Q06736"/>
<dbReference type="ESTHER" id="yeast-met2">
    <property type="family name" value="Homoserine_transacetylase"/>
</dbReference>
<dbReference type="OrthoDB" id="191364at2759"/>
<dbReference type="UniPathway" id="UPA00051">
    <property type="reaction ID" value="UER00074"/>
</dbReference>
<dbReference type="GO" id="GO:0004414">
    <property type="term" value="F:homoserine O-acetyltransferase activity"/>
    <property type="evidence" value="ECO:0007669"/>
    <property type="project" value="UniProtKB-EC"/>
</dbReference>
<dbReference type="GO" id="GO:0009092">
    <property type="term" value="P:homoserine metabolic process"/>
    <property type="evidence" value="ECO:0007669"/>
    <property type="project" value="TreeGrafter"/>
</dbReference>
<dbReference type="GO" id="GO:0009086">
    <property type="term" value="P:methionine biosynthetic process"/>
    <property type="evidence" value="ECO:0007669"/>
    <property type="project" value="UniProtKB-KW"/>
</dbReference>
<dbReference type="Gene3D" id="3.40.50.1820">
    <property type="entry name" value="alpha/beta hydrolase"/>
    <property type="match status" value="1"/>
</dbReference>
<dbReference type="HAMAP" id="MF_00296">
    <property type="entry name" value="MetX_acyltransf"/>
    <property type="match status" value="1"/>
</dbReference>
<dbReference type="InterPro" id="IPR000073">
    <property type="entry name" value="AB_hydrolase_1"/>
</dbReference>
<dbReference type="InterPro" id="IPR029058">
    <property type="entry name" value="AB_hydrolase_fold"/>
</dbReference>
<dbReference type="InterPro" id="IPR008220">
    <property type="entry name" value="HAT_MetX-like"/>
</dbReference>
<dbReference type="NCBIfam" id="TIGR01392">
    <property type="entry name" value="homoserO_Ac_trn"/>
    <property type="match status" value="1"/>
</dbReference>
<dbReference type="PANTHER" id="PTHR32268">
    <property type="entry name" value="HOMOSERINE O-ACETYLTRANSFERASE"/>
    <property type="match status" value="1"/>
</dbReference>
<dbReference type="PANTHER" id="PTHR32268:SF11">
    <property type="entry name" value="HOMOSERINE O-ACETYLTRANSFERASE"/>
    <property type="match status" value="1"/>
</dbReference>
<dbReference type="Pfam" id="PF00561">
    <property type="entry name" value="Abhydrolase_1"/>
    <property type="match status" value="1"/>
</dbReference>
<dbReference type="PIRSF" id="PIRSF000443">
    <property type="entry name" value="Homoser_Ac_trans"/>
    <property type="match status" value="1"/>
</dbReference>
<dbReference type="SUPFAM" id="SSF53474">
    <property type="entry name" value="alpha/beta-Hydrolases"/>
    <property type="match status" value="1"/>
</dbReference>
<keyword id="KW-0012">Acyltransferase</keyword>
<keyword id="KW-0028">Amino-acid biosynthesis</keyword>
<keyword id="KW-0486">Methionine biosynthesis</keyword>
<keyword id="KW-0808">Transferase</keyword>
<accession>Q06736</accession>
<name>MET2_SACPS</name>
<sequence>MSHTAKSKTLQELDIEDIKETNPLLNLVQGQRIVQVPELVLESGVVLNNFPIAYKTWGTLNEACDNVLVICHALTGSADVADWWGPLLGNDLAFDPSRFFIICLNSMGSPYGSFSPLTINEQTGTRYGPEFPLCTVRDDVRAHRIVLDSLGVKSIACVIGGSMGGMLSLEWTAMYGNEYVKNMVALATSARHSAWCISWSEAQRQSIYSDPNYLDGYYPVEEQPVAGLSAARMSALLTYRTRNSFENKFSRRSPSIAQQQKAQKAEVRKPSTVSEHSLQIHNDGYKCKANGAIAGISGQKRQSVVSTTSSSDSLTSQSSMTSVSSVTGEVKDIKPAQTYFSAQSYLRYQGTKFINRFDANCYIAITRKLDTHDLARDRVEDITKVLSAIEQPSLIIGIQSDGLFTYSEQEFLAEYIPNSQLEKIESPEGHDAFLLEFKLINKLIVNFLKTNCKNIMDAKPRTWGGDVGNDETKTSVFGEAEEVTNW</sequence>